<comment type="function">
    <text evidence="1">Catalyzes the NAD(P)(+)-dependent oxidation of D-glucose to D-gluconate via gluconolactone. Can utilize both NAD(+) and NADP(+) as electron acceptor. Is involved in the degradation of glucose through a non-phosphorylative variant of the Entner-Doudoroff pathway.</text>
</comment>
<comment type="catalytic activity">
    <reaction evidence="1">
        <text>D-glucose + NAD(+) = D-glucono-1,5-lactone + NADH + H(+)</text>
        <dbReference type="Rhea" id="RHEA:14293"/>
        <dbReference type="ChEBI" id="CHEBI:4167"/>
        <dbReference type="ChEBI" id="CHEBI:15378"/>
        <dbReference type="ChEBI" id="CHEBI:16217"/>
        <dbReference type="ChEBI" id="CHEBI:57540"/>
        <dbReference type="ChEBI" id="CHEBI:57945"/>
        <dbReference type="EC" id="1.1.1.47"/>
    </reaction>
</comment>
<comment type="catalytic activity">
    <reaction evidence="1">
        <text>D-glucose + NADP(+) = D-glucono-1,5-lactone + NADPH + H(+)</text>
        <dbReference type="Rhea" id="RHEA:14405"/>
        <dbReference type="ChEBI" id="CHEBI:4167"/>
        <dbReference type="ChEBI" id="CHEBI:15378"/>
        <dbReference type="ChEBI" id="CHEBI:16217"/>
        <dbReference type="ChEBI" id="CHEBI:57783"/>
        <dbReference type="ChEBI" id="CHEBI:58349"/>
        <dbReference type="EC" id="1.1.1.47"/>
    </reaction>
</comment>
<comment type="cofactor">
    <cofactor evidence="1">
        <name>Zn(2+)</name>
        <dbReference type="ChEBI" id="CHEBI:29105"/>
    </cofactor>
</comment>
<comment type="similarity">
    <text evidence="1">Belongs to the zinc-containing alcohol dehydrogenase family. Glucose 1-dehydrogenase subfamily.</text>
</comment>
<name>GLCD1_VULM7</name>
<gene>
    <name evidence="1" type="primary">gdh1</name>
    <name type="ordered locus">VMUT_0441</name>
</gene>
<keyword id="KW-0119">Carbohydrate metabolism</keyword>
<keyword id="KW-0479">Metal-binding</keyword>
<keyword id="KW-0520">NAD</keyword>
<keyword id="KW-0521">NADP</keyword>
<keyword id="KW-0547">Nucleotide-binding</keyword>
<keyword id="KW-0560">Oxidoreductase</keyword>
<keyword id="KW-0862">Zinc</keyword>
<sequence length="351" mass="38636">MKAVTVIPLVKDSLALRDMPKPSPKRYQVLLSPIEVGVCGTDKDIIEGRYGAPPPGEEYLILGHESVAEVVELGDDVDNVSVGDIVVPTVRRPTTCTLPITEVDYCPRGTYAEHGIWYLHGFATEFAVTDSQYLVKVPKEAIDVAVLTEPLSIVEKGIDLALRLGKARFESWSPRRVLIMGAGPIGMLALMVMRLRDFADITVTATRPYDSLKAKLVREIGATYVNTNIDQINGDFDIVIEATGSTSAAYDALRHLGADGVAVLLGIYLDSKNVNIRPLLDDWRRNKLIIGATNASIGAFEMGVADLVKAKFEFGGWVRKLITKEVTLDEYEYAYNWGHEDIKSVIQIRSL</sequence>
<organism>
    <name type="scientific">Vulcanisaeta moutnovskia (strain 768-28)</name>
    <dbReference type="NCBI Taxonomy" id="985053"/>
    <lineage>
        <taxon>Archaea</taxon>
        <taxon>Thermoproteota</taxon>
        <taxon>Thermoprotei</taxon>
        <taxon>Thermoproteales</taxon>
        <taxon>Thermoproteaceae</taxon>
        <taxon>Vulcanisaeta</taxon>
    </lineage>
</organism>
<feature type="chain" id="PRO_0000414845" description="Glucose 1-dehydrogenase 1">
    <location>
        <begin position="1"/>
        <end position="351"/>
    </location>
</feature>
<feature type="binding site" evidence="1">
    <location>
        <position position="39"/>
    </location>
    <ligand>
        <name>Zn(2+)</name>
        <dbReference type="ChEBI" id="CHEBI:29105"/>
        <note>catalytic</note>
    </ligand>
</feature>
<feature type="binding site" evidence="1">
    <location>
        <position position="41"/>
    </location>
    <ligand>
        <name>substrate</name>
    </ligand>
</feature>
<feature type="binding site" evidence="1">
    <location>
        <position position="64"/>
    </location>
    <ligand>
        <name>Zn(2+)</name>
        <dbReference type="ChEBI" id="CHEBI:29105"/>
        <note>catalytic</note>
    </ligand>
</feature>
<feature type="binding site" evidence="1">
    <location>
        <position position="65"/>
    </location>
    <ligand>
        <name>Zn(2+)</name>
        <dbReference type="ChEBI" id="CHEBI:29105"/>
        <note>catalytic</note>
    </ligand>
</feature>
<feature type="binding site" evidence="1">
    <location>
        <position position="113"/>
    </location>
    <ligand>
        <name>substrate</name>
    </ligand>
</feature>
<feature type="binding site" evidence="1">
    <location>
        <position position="149"/>
    </location>
    <ligand>
        <name>substrate</name>
    </ligand>
</feature>
<feature type="binding site" evidence="1">
    <location>
        <position position="149"/>
    </location>
    <ligand>
        <name>Zn(2+)</name>
        <dbReference type="ChEBI" id="CHEBI:29105"/>
        <note>catalytic</note>
    </ligand>
</feature>
<feature type="binding site" evidence="1">
    <location>
        <begin position="182"/>
        <end position="185"/>
    </location>
    <ligand>
        <name>NADP(+)</name>
        <dbReference type="ChEBI" id="CHEBI:58349"/>
    </ligand>
</feature>
<feature type="binding site" evidence="1">
    <location>
        <begin position="265"/>
        <end position="267"/>
    </location>
    <ligand>
        <name>NADP(+)</name>
        <dbReference type="ChEBI" id="CHEBI:58349"/>
    </ligand>
</feature>
<feature type="binding site" evidence="1">
    <location>
        <begin position="292"/>
        <end position="294"/>
    </location>
    <ligand>
        <name>NADP(+)</name>
        <dbReference type="ChEBI" id="CHEBI:58349"/>
    </ligand>
</feature>
<feature type="binding site" evidence="1">
    <location>
        <position position="294"/>
    </location>
    <ligand>
        <name>substrate</name>
    </ligand>
</feature>
<evidence type="ECO:0000255" key="1">
    <source>
        <dbReference type="HAMAP-Rule" id="MF_02127"/>
    </source>
</evidence>
<dbReference type="EC" id="1.1.1.47" evidence="1"/>
<dbReference type="EMBL" id="CP002529">
    <property type="protein sequence ID" value="ADY00653.1"/>
    <property type="molecule type" value="Genomic_DNA"/>
</dbReference>
<dbReference type="RefSeq" id="WP_013603816.1">
    <property type="nucleotide sequence ID" value="NC_015151.1"/>
</dbReference>
<dbReference type="SMR" id="F0QUB3"/>
<dbReference type="STRING" id="985053.VMUT_0441"/>
<dbReference type="GeneID" id="10288093"/>
<dbReference type="KEGG" id="vmo:VMUT_0441"/>
<dbReference type="eggNOG" id="arCOG01459">
    <property type="taxonomic scope" value="Archaea"/>
</dbReference>
<dbReference type="HOGENOM" id="CLU_026673_1_0_2"/>
<dbReference type="OrthoDB" id="41394at2157"/>
<dbReference type="Proteomes" id="UP000007485">
    <property type="component" value="Chromosome"/>
</dbReference>
<dbReference type="GO" id="GO:0005536">
    <property type="term" value="F:D-glucose binding"/>
    <property type="evidence" value="ECO:0007669"/>
    <property type="project" value="UniProtKB-UniRule"/>
</dbReference>
<dbReference type="GO" id="GO:0047934">
    <property type="term" value="F:glucose 1-dehydrogenase (NAD+) activity"/>
    <property type="evidence" value="ECO:0007669"/>
    <property type="project" value="RHEA"/>
</dbReference>
<dbReference type="GO" id="GO:0047935">
    <property type="term" value="F:glucose 1-dehydrogenase (NADP+) activity"/>
    <property type="evidence" value="ECO:0007669"/>
    <property type="project" value="RHEA"/>
</dbReference>
<dbReference type="GO" id="GO:0070403">
    <property type="term" value="F:NAD+ binding"/>
    <property type="evidence" value="ECO:0007669"/>
    <property type="project" value="UniProtKB-UniRule"/>
</dbReference>
<dbReference type="GO" id="GO:0070401">
    <property type="term" value="F:NADP+ binding"/>
    <property type="evidence" value="ECO:0007669"/>
    <property type="project" value="UniProtKB-UniRule"/>
</dbReference>
<dbReference type="GO" id="GO:0008270">
    <property type="term" value="F:zinc ion binding"/>
    <property type="evidence" value="ECO:0007669"/>
    <property type="project" value="UniProtKB-UniRule"/>
</dbReference>
<dbReference type="GO" id="GO:0019595">
    <property type="term" value="P:non-phosphorylated glucose catabolic process"/>
    <property type="evidence" value="ECO:0007669"/>
    <property type="project" value="UniProtKB-UniRule"/>
</dbReference>
<dbReference type="CDD" id="cd08230">
    <property type="entry name" value="glucose_DH"/>
    <property type="match status" value="1"/>
</dbReference>
<dbReference type="Gene3D" id="3.90.180.10">
    <property type="entry name" value="Medium-chain alcohol dehydrogenases, catalytic domain"/>
    <property type="match status" value="1"/>
</dbReference>
<dbReference type="Gene3D" id="3.40.50.720">
    <property type="entry name" value="NAD(P)-binding Rossmann-like Domain"/>
    <property type="match status" value="1"/>
</dbReference>
<dbReference type="HAMAP" id="MF_02127">
    <property type="entry name" value="Glucose_DH"/>
    <property type="match status" value="1"/>
</dbReference>
<dbReference type="InterPro" id="IPR013154">
    <property type="entry name" value="ADH-like_N"/>
</dbReference>
<dbReference type="InterPro" id="IPR026583">
    <property type="entry name" value="Glc_1-DH_arc"/>
</dbReference>
<dbReference type="InterPro" id="IPR031640">
    <property type="entry name" value="Glu_dehyd_C"/>
</dbReference>
<dbReference type="InterPro" id="IPR011032">
    <property type="entry name" value="GroES-like_sf"/>
</dbReference>
<dbReference type="InterPro" id="IPR036291">
    <property type="entry name" value="NAD(P)-bd_dom_sf"/>
</dbReference>
<dbReference type="PANTHER" id="PTHR43189:SF2">
    <property type="entry name" value="GLUCOSE 1-DEHYDROGENASE"/>
    <property type="match status" value="1"/>
</dbReference>
<dbReference type="PANTHER" id="PTHR43189">
    <property type="entry name" value="ZINC-TYPE ALCOHOL DEHYDROGENASE-LIKE PROTEIN C1198.01-RELATED"/>
    <property type="match status" value="1"/>
</dbReference>
<dbReference type="Pfam" id="PF08240">
    <property type="entry name" value="ADH_N"/>
    <property type="match status" value="1"/>
</dbReference>
<dbReference type="Pfam" id="PF16912">
    <property type="entry name" value="Glu_dehyd_C"/>
    <property type="match status" value="1"/>
</dbReference>
<dbReference type="SUPFAM" id="SSF50129">
    <property type="entry name" value="GroES-like"/>
    <property type="match status" value="1"/>
</dbReference>
<dbReference type="SUPFAM" id="SSF51735">
    <property type="entry name" value="NAD(P)-binding Rossmann-fold domains"/>
    <property type="match status" value="1"/>
</dbReference>
<reference key="1">
    <citation type="journal article" date="2011" name="J. Bacteriol.">
        <title>Complete genome sequence of 'Vulcanisaeta moutnovskia' strain 768-28, a novel member of the hyperthermophilic crenarchaeal genus vulcanisaeta.</title>
        <authorList>
            <person name="Gumerov V.M."/>
            <person name="Mardanov A.V."/>
            <person name="Beletsky A.V."/>
            <person name="Prokofeva M.I."/>
            <person name="Bonch-Osmolovskaya E.A."/>
            <person name="Ravin N.V."/>
            <person name="Skryabin K.G."/>
        </authorList>
    </citation>
    <scope>NUCLEOTIDE SEQUENCE [LARGE SCALE GENOMIC DNA]</scope>
    <source>
        <strain>768-28</strain>
    </source>
</reference>
<proteinExistence type="inferred from homology"/>
<accession>F0QUB3</accession>
<protein>
    <recommendedName>
        <fullName evidence="1">Glucose 1-dehydrogenase 1</fullName>
        <shortName evidence="1">GDH 1</shortName>
        <shortName evidence="1">GlcDH 1</shortName>
        <ecNumber evidence="1">1.1.1.47</ecNumber>
    </recommendedName>
</protein>